<comment type="function">
    <text>May be used by cells under conditions in which the level of glycolytic flux is very low.</text>
</comment>
<comment type="catalytic activity">
    <reaction>
        <text>pyruvate + ATP = phosphoenolpyruvate + ADP + H(+)</text>
        <dbReference type="Rhea" id="RHEA:18157"/>
        <dbReference type="ChEBI" id="CHEBI:15361"/>
        <dbReference type="ChEBI" id="CHEBI:15378"/>
        <dbReference type="ChEBI" id="CHEBI:30616"/>
        <dbReference type="ChEBI" id="CHEBI:58702"/>
        <dbReference type="ChEBI" id="CHEBI:456216"/>
        <dbReference type="EC" id="2.7.1.40"/>
    </reaction>
</comment>
<comment type="cofactor">
    <cofactor evidence="1">
        <name>Mg(2+)</name>
        <dbReference type="ChEBI" id="CHEBI:18420"/>
    </cofactor>
</comment>
<comment type="cofactor">
    <cofactor evidence="1">
        <name>K(+)</name>
        <dbReference type="ChEBI" id="CHEBI:29103"/>
    </cofactor>
</comment>
<comment type="activity regulation">
    <text>Not activated by fructose-1,6-bisphosphate.</text>
</comment>
<comment type="pathway">
    <text>Carbohydrate degradation; glycolysis; pyruvate from D-glyceraldehyde 3-phosphate: step 5/5.</text>
</comment>
<comment type="subunit">
    <text evidence="1">Homotetramer.</text>
</comment>
<comment type="miscellaneous">
    <text evidence="4">Present with 2130 molecules/cell in log phase SD medium.</text>
</comment>
<comment type="similarity">
    <text evidence="5">Belongs to the pyruvate kinase family.</text>
</comment>
<evidence type="ECO:0000250" key="1"/>
<evidence type="ECO:0000250" key="2">
    <source>
        <dbReference type="UniProtKB" id="P14618"/>
    </source>
</evidence>
<evidence type="ECO:0000255" key="3"/>
<evidence type="ECO:0000269" key="4">
    <source>
    </source>
</evidence>
<evidence type="ECO:0000305" key="5"/>
<protein>
    <recommendedName>
        <fullName>Pyruvate kinase 2</fullName>
        <shortName>PK 2</shortName>
        <ecNumber>2.7.1.40</ecNumber>
    </recommendedName>
</protein>
<accession>P52489</accession>
<accession>D6W342</accession>
<gene>
    <name type="primary">PYK2</name>
    <name type="ordered locus">YOR347C</name>
    <name type="ORF">O6342</name>
</gene>
<organism>
    <name type="scientific">Saccharomyces cerevisiae (strain ATCC 204508 / S288c)</name>
    <name type="common">Baker's yeast</name>
    <dbReference type="NCBI Taxonomy" id="559292"/>
    <lineage>
        <taxon>Eukaryota</taxon>
        <taxon>Fungi</taxon>
        <taxon>Dikarya</taxon>
        <taxon>Ascomycota</taxon>
        <taxon>Saccharomycotina</taxon>
        <taxon>Saccharomycetes</taxon>
        <taxon>Saccharomycetales</taxon>
        <taxon>Saccharomycetaceae</taxon>
        <taxon>Saccharomyces</taxon>
    </lineage>
</organism>
<sequence>MPESRLQRLANLKIGTPQQLRRTSIIGTIGPKTNSCEAITALRKAGLNIIRLNFSHGSYEFHQSVIENAVKSEQQFPGRPLAIALDTKGPEIRTGRTLNDQDLYIPVDHQMIFTTDASFANTSNDKIMYIDYANLTKVIVPGRFIYVDDGILSFKVLQIIDESNLRVQAVNSGYIASHKGVNLPNTDVDLPPLSAKDMKDLQFGVRNGIHIVFASFIRTSEDVLSIRKALGSEGQDIKIISKIENQQGLDNFDEILEVTDGVMIARGDLGIEILAPEVLAIQKKLIAKCNLAGKPVICATQMLDSMTHNPRPTRAEVSDVGNAVLDGADCVMLSGETAKGDYPVNAVNIMAATALIAESTIAHLALYDDLRDATPKPTSTTETVAAAATAAILEQDGKAIVVLSTTGNTARLLSKYRPSCPIILVTRHARTARIAHLYRGVFPFLYEPKRLDDWGEDVHRRLKFGVEMARSFGMVDNGDTVVSIQGFKGGVGHSNTLRISTVGQEF</sequence>
<feature type="chain" id="PRO_0000112122" description="Pyruvate kinase 2">
    <location>
        <begin position="1"/>
        <end position="506"/>
    </location>
</feature>
<feature type="binding site" evidence="1">
    <location>
        <position position="51"/>
    </location>
    <ligand>
        <name>substrate</name>
    </ligand>
</feature>
<feature type="binding site" evidence="2">
    <location>
        <begin position="53"/>
        <end position="56"/>
    </location>
    <ligand>
        <name>ATP</name>
        <dbReference type="ChEBI" id="CHEBI:30616"/>
    </ligand>
</feature>
<feature type="binding site" evidence="1">
    <location>
        <position position="53"/>
    </location>
    <ligand>
        <name>K(+)</name>
        <dbReference type="ChEBI" id="CHEBI:29103"/>
    </ligand>
</feature>
<feature type="binding site" evidence="1">
    <location>
        <position position="55"/>
    </location>
    <ligand>
        <name>K(+)</name>
        <dbReference type="ChEBI" id="CHEBI:29103"/>
    </ligand>
</feature>
<feature type="binding site" evidence="1">
    <location>
        <position position="86"/>
    </location>
    <ligand>
        <name>K(+)</name>
        <dbReference type="ChEBI" id="CHEBI:29103"/>
    </ligand>
</feature>
<feature type="binding site" evidence="1">
    <location>
        <position position="87"/>
    </location>
    <ligand>
        <name>K(+)</name>
        <dbReference type="ChEBI" id="CHEBI:29103"/>
    </ligand>
</feature>
<feature type="binding site" evidence="2">
    <location>
        <position position="93"/>
    </location>
    <ligand>
        <name>ATP</name>
        <dbReference type="ChEBI" id="CHEBI:30616"/>
    </ligand>
</feature>
<feature type="binding site" evidence="2">
    <location>
        <position position="179"/>
    </location>
    <ligand>
        <name>ATP</name>
        <dbReference type="ChEBI" id="CHEBI:30616"/>
    </ligand>
</feature>
<feature type="binding site" evidence="3">
    <location>
        <position position="244"/>
    </location>
    <ligand>
        <name>Mg(2+)</name>
        <dbReference type="ChEBI" id="CHEBI:18420"/>
    </ligand>
</feature>
<feature type="binding site" evidence="1">
    <location>
        <position position="267"/>
    </location>
    <ligand>
        <name>substrate</name>
    </ligand>
</feature>
<feature type="binding site" evidence="1">
    <location>
        <position position="268"/>
    </location>
    <ligand>
        <name>Mg(2+)</name>
        <dbReference type="ChEBI" id="CHEBI:18420"/>
    </ligand>
</feature>
<feature type="binding site" evidence="1">
    <location>
        <position position="268"/>
    </location>
    <ligand>
        <name>substrate</name>
    </ligand>
</feature>
<feature type="binding site" evidence="1">
    <location>
        <position position="300"/>
    </location>
    <ligand>
        <name>substrate</name>
    </ligand>
</feature>
<feature type="site" description="Transition state stabilizer" evidence="1">
    <location>
        <position position="242"/>
    </location>
</feature>
<feature type="modified residue" description="Phosphoserine" evidence="3">
    <location>
        <position position="24"/>
    </location>
</feature>
<reference key="1">
    <citation type="journal article" date="1996" name="Yeast">
        <title>Nucleotide sequence analysis of a 40 kb segment on the right arm of yeast chromosome XV reveals 18 open reading frames including a new pyruvate kinase and three homologues to chromosome I genes.</title>
        <authorList>
            <person name="Purnelle B."/>
            <person name="Goffeau A."/>
        </authorList>
    </citation>
    <scope>NUCLEOTIDE SEQUENCE [GENOMIC DNA]</scope>
    <source>
        <strain>ATCC 90843 / S288c / FY73</strain>
    </source>
</reference>
<reference key="2">
    <citation type="journal article" date="1997" name="Nature">
        <title>The nucleotide sequence of Saccharomyces cerevisiae chromosome XV.</title>
        <authorList>
            <person name="Dujon B."/>
            <person name="Albermann K."/>
            <person name="Aldea M."/>
            <person name="Alexandraki D."/>
            <person name="Ansorge W."/>
            <person name="Arino J."/>
            <person name="Benes V."/>
            <person name="Bohn C."/>
            <person name="Bolotin-Fukuhara M."/>
            <person name="Bordonne R."/>
            <person name="Boyer J."/>
            <person name="Camasses A."/>
            <person name="Casamayor A."/>
            <person name="Casas C."/>
            <person name="Cheret G."/>
            <person name="Cziepluch C."/>
            <person name="Daignan-Fornier B."/>
            <person name="Dang V.-D."/>
            <person name="de Haan M."/>
            <person name="Delius H."/>
            <person name="Durand P."/>
            <person name="Fairhead C."/>
            <person name="Feldmann H."/>
            <person name="Gaillon L."/>
            <person name="Galisson F."/>
            <person name="Gamo F.-J."/>
            <person name="Gancedo C."/>
            <person name="Goffeau A."/>
            <person name="Goulding S.E."/>
            <person name="Grivell L.A."/>
            <person name="Habbig B."/>
            <person name="Hand N.J."/>
            <person name="Hani J."/>
            <person name="Hattenhorst U."/>
            <person name="Hebling U."/>
            <person name="Hernando Y."/>
            <person name="Herrero E."/>
            <person name="Heumann K."/>
            <person name="Hiesel R."/>
            <person name="Hilger F."/>
            <person name="Hofmann B."/>
            <person name="Hollenberg C.P."/>
            <person name="Hughes B."/>
            <person name="Jauniaux J.-C."/>
            <person name="Kalogeropoulos A."/>
            <person name="Katsoulou C."/>
            <person name="Kordes E."/>
            <person name="Lafuente M.J."/>
            <person name="Landt O."/>
            <person name="Louis E.J."/>
            <person name="Maarse A.C."/>
            <person name="Madania A."/>
            <person name="Mannhaupt G."/>
            <person name="Marck C."/>
            <person name="Martin R.P."/>
            <person name="Mewes H.-W."/>
            <person name="Michaux G."/>
            <person name="Paces V."/>
            <person name="Parle-McDermott A.G."/>
            <person name="Pearson B.M."/>
            <person name="Perrin A."/>
            <person name="Pettersson B."/>
            <person name="Poch O."/>
            <person name="Pohl T.M."/>
            <person name="Poirey R."/>
            <person name="Portetelle D."/>
            <person name="Pujol A."/>
            <person name="Purnelle B."/>
            <person name="Ramezani Rad M."/>
            <person name="Rechmann S."/>
            <person name="Schwager C."/>
            <person name="Schweizer M."/>
            <person name="Sor F."/>
            <person name="Sterky F."/>
            <person name="Tarassov I.A."/>
            <person name="Teodoru C."/>
            <person name="Tettelin H."/>
            <person name="Thierry A."/>
            <person name="Tobiasch E."/>
            <person name="Tzermia M."/>
            <person name="Uhlen M."/>
            <person name="Unseld M."/>
            <person name="Valens M."/>
            <person name="Vandenbol M."/>
            <person name="Vetter I."/>
            <person name="Vlcek C."/>
            <person name="Voet M."/>
            <person name="Volckaert G."/>
            <person name="Voss H."/>
            <person name="Wambutt R."/>
            <person name="Wedler H."/>
            <person name="Wiemann S."/>
            <person name="Winsor B."/>
            <person name="Wolfe K.H."/>
            <person name="Zollner A."/>
            <person name="Zumstein E."/>
            <person name="Kleine K."/>
        </authorList>
    </citation>
    <scope>NUCLEOTIDE SEQUENCE [LARGE SCALE GENOMIC DNA]</scope>
    <source>
        <strain>ATCC 204508 / S288c</strain>
    </source>
</reference>
<reference key="3">
    <citation type="journal article" date="2014" name="G3 (Bethesda)">
        <title>The reference genome sequence of Saccharomyces cerevisiae: Then and now.</title>
        <authorList>
            <person name="Engel S.R."/>
            <person name="Dietrich F.S."/>
            <person name="Fisk D.G."/>
            <person name="Binkley G."/>
            <person name="Balakrishnan R."/>
            <person name="Costanzo M.C."/>
            <person name="Dwight S.S."/>
            <person name="Hitz B.C."/>
            <person name="Karra K."/>
            <person name="Nash R.S."/>
            <person name="Weng S."/>
            <person name="Wong E.D."/>
            <person name="Lloyd P."/>
            <person name="Skrzypek M.S."/>
            <person name="Miyasato S.R."/>
            <person name="Simison M."/>
            <person name="Cherry J.M."/>
        </authorList>
    </citation>
    <scope>GENOME REANNOTATION</scope>
    <source>
        <strain>ATCC 204508 / S288c</strain>
    </source>
</reference>
<reference key="4">
    <citation type="journal article" date="1997" name="J. Bacteriol.">
        <title>Characterization of a glucose-repressed pyruvate kinase (Pyk2p) in Saccharomyces cerevisiae that is catalytically insensitive to fructose-1,6-bisphosphate.</title>
        <authorList>
            <person name="Boles E."/>
            <person name="Schulte F."/>
            <person name="Miosga T."/>
            <person name="Freidel K."/>
            <person name="Schlueter E."/>
            <person name="Zimmermann F.K."/>
            <person name="Hollenberg C.P."/>
            <person name="Heinisch J.J."/>
        </authorList>
    </citation>
    <scope>CHARACTERIZATION</scope>
</reference>
<reference key="5">
    <citation type="journal article" date="2003" name="Nature">
        <title>Global analysis of protein expression in yeast.</title>
        <authorList>
            <person name="Ghaemmaghami S."/>
            <person name="Huh W.-K."/>
            <person name="Bower K."/>
            <person name="Howson R.W."/>
            <person name="Belle A."/>
            <person name="Dephoure N."/>
            <person name="O'Shea E.K."/>
            <person name="Weissman J.S."/>
        </authorList>
    </citation>
    <scope>LEVEL OF PROTEIN EXPRESSION [LARGE SCALE ANALYSIS]</scope>
</reference>
<name>KPYK2_YEAST</name>
<dbReference type="EC" id="2.7.1.40"/>
<dbReference type="EMBL" id="X95720">
    <property type="protein sequence ID" value="CAA65034.1"/>
    <property type="molecule type" value="Genomic_DNA"/>
</dbReference>
<dbReference type="EMBL" id="Z75255">
    <property type="protein sequence ID" value="CAA99675.1"/>
    <property type="molecule type" value="Genomic_DNA"/>
</dbReference>
<dbReference type="EMBL" id="BK006948">
    <property type="protein sequence ID" value="DAA11108.1"/>
    <property type="molecule type" value="Genomic_DNA"/>
</dbReference>
<dbReference type="PIR" id="S67256">
    <property type="entry name" value="S67256"/>
</dbReference>
<dbReference type="RefSeq" id="NP_014992.3">
    <property type="nucleotide sequence ID" value="NM_001183767.3"/>
</dbReference>
<dbReference type="SMR" id="P52489"/>
<dbReference type="BioGRID" id="34732">
    <property type="interactions" value="95"/>
</dbReference>
<dbReference type="FunCoup" id="P52489">
    <property type="interactions" value="675"/>
</dbReference>
<dbReference type="IntAct" id="P52489">
    <property type="interactions" value="13"/>
</dbReference>
<dbReference type="MINT" id="P52489"/>
<dbReference type="STRING" id="4932.YOR347C"/>
<dbReference type="iPTMnet" id="P52489"/>
<dbReference type="PaxDb" id="4932-YOR347C"/>
<dbReference type="PeptideAtlas" id="P52489"/>
<dbReference type="EnsemblFungi" id="YOR347C_mRNA">
    <property type="protein sequence ID" value="YOR347C"/>
    <property type="gene ID" value="YOR347C"/>
</dbReference>
<dbReference type="GeneID" id="854529"/>
<dbReference type="KEGG" id="sce:YOR347C"/>
<dbReference type="AGR" id="SGD:S000005874"/>
<dbReference type="SGD" id="S000005874">
    <property type="gene designation" value="PYK2"/>
</dbReference>
<dbReference type="VEuPathDB" id="FungiDB:YOR347C"/>
<dbReference type="eggNOG" id="KOG2323">
    <property type="taxonomic scope" value="Eukaryota"/>
</dbReference>
<dbReference type="GeneTree" id="ENSGT00390000008859"/>
<dbReference type="HOGENOM" id="CLU_015439_0_1_1"/>
<dbReference type="InParanoid" id="P52489"/>
<dbReference type="OMA" id="FERCDES"/>
<dbReference type="OrthoDB" id="108365at2759"/>
<dbReference type="BioCyc" id="YEAST:YOR347C-MONOMER"/>
<dbReference type="Reactome" id="R-SCE-6798695">
    <property type="pathway name" value="Neutrophil degranulation"/>
</dbReference>
<dbReference type="Reactome" id="R-SCE-70171">
    <property type="pathway name" value="Glycolysis"/>
</dbReference>
<dbReference type="Reactome" id="R-SCE-70268">
    <property type="pathway name" value="Pyruvate metabolism"/>
</dbReference>
<dbReference type="Reactome" id="R-SCE-9861718">
    <property type="pathway name" value="Regulation of pyruvate metabolism"/>
</dbReference>
<dbReference type="SABIO-RK" id="P52489"/>
<dbReference type="UniPathway" id="UPA00109">
    <property type="reaction ID" value="UER00188"/>
</dbReference>
<dbReference type="BioGRID-ORCS" id="854529">
    <property type="hits" value="0 hits in 10 CRISPR screens"/>
</dbReference>
<dbReference type="PRO" id="PR:P52489"/>
<dbReference type="Proteomes" id="UP000002311">
    <property type="component" value="Chromosome XV"/>
</dbReference>
<dbReference type="RNAct" id="P52489">
    <property type="molecule type" value="protein"/>
</dbReference>
<dbReference type="GO" id="GO:0005737">
    <property type="term" value="C:cytoplasm"/>
    <property type="evidence" value="ECO:0007005"/>
    <property type="project" value="SGD"/>
</dbReference>
<dbReference type="GO" id="GO:0005739">
    <property type="term" value="C:mitochondrion"/>
    <property type="evidence" value="ECO:0000314"/>
    <property type="project" value="SGD"/>
</dbReference>
<dbReference type="GO" id="GO:0005524">
    <property type="term" value="F:ATP binding"/>
    <property type="evidence" value="ECO:0007669"/>
    <property type="project" value="UniProtKB-KW"/>
</dbReference>
<dbReference type="GO" id="GO:0016301">
    <property type="term" value="F:kinase activity"/>
    <property type="evidence" value="ECO:0007669"/>
    <property type="project" value="UniProtKB-KW"/>
</dbReference>
<dbReference type="GO" id="GO:0000287">
    <property type="term" value="F:magnesium ion binding"/>
    <property type="evidence" value="ECO:0007669"/>
    <property type="project" value="InterPro"/>
</dbReference>
<dbReference type="GO" id="GO:1904408">
    <property type="term" value="F:melatonin binding"/>
    <property type="evidence" value="ECO:0000314"/>
    <property type="project" value="SGD"/>
</dbReference>
<dbReference type="GO" id="GO:0030955">
    <property type="term" value="F:potassium ion binding"/>
    <property type="evidence" value="ECO:0007669"/>
    <property type="project" value="InterPro"/>
</dbReference>
<dbReference type="GO" id="GO:0004743">
    <property type="term" value="F:pyruvate kinase activity"/>
    <property type="evidence" value="ECO:0000315"/>
    <property type="project" value="SGD"/>
</dbReference>
<dbReference type="GO" id="GO:0006096">
    <property type="term" value="P:glycolytic process"/>
    <property type="evidence" value="ECO:0000318"/>
    <property type="project" value="GO_Central"/>
</dbReference>
<dbReference type="GO" id="GO:0006090">
    <property type="term" value="P:pyruvate metabolic process"/>
    <property type="evidence" value="ECO:0000315"/>
    <property type="project" value="SGD"/>
</dbReference>
<dbReference type="CDD" id="cd00288">
    <property type="entry name" value="Pyruvate_Kinase"/>
    <property type="match status" value="1"/>
</dbReference>
<dbReference type="FunFam" id="2.40.33.10:FF:000001">
    <property type="entry name" value="Pyruvate kinase"/>
    <property type="match status" value="1"/>
</dbReference>
<dbReference type="FunFam" id="3.20.20.60:FF:000025">
    <property type="entry name" value="Pyruvate kinase"/>
    <property type="match status" value="1"/>
</dbReference>
<dbReference type="FunFam" id="3.40.1380.20:FF:000001">
    <property type="entry name" value="Pyruvate kinase"/>
    <property type="match status" value="1"/>
</dbReference>
<dbReference type="Gene3D" id="3.20.20.60">
    <property type="entry name" value="Phosphoenolpyruvate-binding domains"/>
    <property type="match status" value="1"/>
</dbReference>
<dbReference type="Gene3D" id="2.40.33.10">
    <property type="entry name" value="PK beta-barrel domain-like"/>
    <property type="match status" value="1"/>
</dbReference>
<dbReference type="Gene3D" id="3.40.1380.20">
    <property type="entry name" value="Pyruvate kinase, C-terminal domain"/>
    <property type="match status" value="1"/>
</dbReference>
<dbReference type="InterPro" id="IPR001697">
    <property type="entry name" value="Pyr_Knase"/>
</dbReference>
<dbReference type="InterPro" id="IPR015813">
    <property type="entry name" value="Pyrv/PenolPyrv_kinase-like_dom"/>
</dbReference>
<dbReference type="InterPro" id="IPR040442">
    <property type="entry name" value="Pyrv_kinase-like_dom_sf"/>
</dbReference>
<dbReference type="InterPro" id="IPR011037">
    <property type="entry name" value="Pyrv_Knase-like_insert_dom_sf"/>
</dbReference>
<dbReference type="InterPro" id="IPR018209">
    <property type="entry name" value="Pyrv_Knase_AS"/>
</dbReference>
<dbReference type="InterPro" id="IPR015793">
    <property type="entry name" value="Pyrv_Knase_brl"/>
</dbReference>
<dbReference type="InterPro" id="IPR015795">
    <property type="entry name" value="Pyrv_Knase_C"/>
</dbReference>
<dbReference type="InterPro" id="IPR036918">
    <property type="entry name" value="Pyrv_Knase_C_sf"/>
</dbReference>
<dbReference type="InterPro" id="IPR015806">
    <property type="entry name" value="Pyrv_Knase_insert_dom_sf"/>
</dbReference>
<dbReference type="NCBIfam" id="NF004491">
    <property type="entry name" value="PRK05826.1"/>
    <property type="match status" value="1"/>
</dbReference>
<dbReference type="NCBIfam" id="NF004978">
    <property type="entry name" value="PRK06354.1"/>
    <property type="match status" value="1"/>
</dbReference>
<dbReference type="NCBIfam" id="TIGR01064">
    <property type="entry name" value="pyruv_kin"/>
    <property type="match status" value="1"/>
</dbReference>
<dbReference type="PANTHER" id="PTHR11817">
    <property type="entry name" value="PYRUVATE KINASE"/>
    <property type="match status" value="1"/>
</dbReference>
<dbReference type="Pfam" id="PF00224">
    <property type="entry name" value="PK"/>
    <property type="match status" value="1"/>
</dbReference>
<dbReference type="Pfam" id="PF02887">
    <property type="entry name" value="PK_C"/>
    <property type="match status" value="1"/>
</dbReference>
<dbReference type="PRINTS" id="PR01050">
    <property type="entry name" value="PYRUVTKNASE"/>
</dbReference>
<dbReference type="SUPFAM" id="SSF51621">
    <property type="entry name" value="Phosphoenolpyruvate/pyruvate domain"/>
    <property type="match status" value="1"/>
</dbReference>
<dbReference type="SUPFAM" id="SSF50800">
    <property type="entry name" value="PK beta-barrel domain-like"/>
    <property type="match status" value="1"/>
</dbReference>
<dbReference type="SUPFAM" id="SSF52935">
    <property type="entry name" value="PK C-terminal domain-like"/>
    <property type="match status" value="1"/>
</dbReference>
<dbReference type="PROSITE" id="PS00110">
    <property type="entry name" value="PYRUVATE_KINASE"/>
    <property type="match status" value="1"/>
</dbReference>
<keyword id="KW-0067">ATP-binding</keyword>
<keyword id="KW-0324">Glycolysis</keyword>
<keyword id="KW-0418">Kinase</keyword>
<keyword id="KW-0460">Magnesium</keyword>
<keyword id="KW-0479">Metal-binding</keyword>
<keyword id="KW-0547">Nucleotide-binding</keyword>
<keyword id="KW-0597">Phosphoprotein</keyword>
<keyword id="KW-0630">Potassium</keyword>
<keyword id="KW-0670">Pyruvate</keyword>
<keyword id="KW-1185">Reference proteome</keyword>
<keyword id="KW-0808">Transferase</keyword>
<proteinExistence type="evidence at protein level"/>